<keyword id="KW-0963">Cytoplasm</keyword>
<keyword id="KW-0396">Initiation factor</keyword>
<keyword id="KW-0648">Protein biosynthesis</keyword>
<keyword id="KW-1185">Reference proteome</keyword>
<keyword id="KW-0677">Repeat</keyword>
<keyword id="KW-0853">WD repeat</keyword>
<proteinExistence type="evidence at transcript level"/>
<name>EIF3I_TAEGU</name>
<organism>
    <name type="scientific">Taeniopygia guttata</name>
    <name type="common">Zebra finch</name>
    <name type="synonym">Poephila guttata</name>
    <dbReference type="NCBI Taxonomy" id="59729"/>
    <lineage>
        <taxon>Eukaryota</taxon>
        <taxon>Metazoa</taxon>
        <taxon>Chordata</taxon>
        <taxon>Craniata</taxon>
        <taxon>Vertebrata</taxon>
        <taxon>Euteleostomi</taxon>
        <taxon>Archelosauria</taxon>
        <taxon>Archosauria</taxon>
        <taxon>Dinosauria</taxon>
        <taxon>Saurischia</taxon>
        <taxon>Theropoda</taxon>
        <taxon>Coelurosauria</taxon>
        <taxon>Aves</taxon>
        <taxon>Neognathae</taxon>
        <taxon>Neoaves</taxon>
        <taxon>Telluraves</taxon>
        <taxon>Australaves</taxon>
        <taxon>Passeriformes</taxon>
        <taxon>Passeroidea</taxon>
        <taxon>Estrildidae</taxon>
        <taxon>Estrildinae</taxon>
        <taxon>Taeniopygia</taxon>
    </lineage>
</organism>
<comment type="function">
    <text evidence="1">Component of the eukaryotic translation initiation factor 3 (eIF-3) complex, which is involved in protein synthesis of a specialized repertoire of mRNAs and, together with other initiation factors, stimulates binding of mRNA and methionyl-tRNAi to the 40S ribosome. The eIF-3 complex specifically targets and initiates translation of a subset of mRNAs involved in cell proliferation.</text>
</comment>
<comment type="subunit">
    <text evidence="1">Component of the eukaryotic translation initiation factor 3 (eIF-3) complex, which is composed of 13 subunits: EIF3A, EIF3B, EIF3C, EIF3D, EIF3E, EIF3F, EIF3G, EIF3H, EIF3I, EIF3J, EIF3K, EIF3L and EIF3M.</text>
</comment>
<comment type="subcellular location">
    <subcellularLocation>
        <location evidence="1">Cytoplasm</location>
    </subcellularLocation>
</comment>
<comment type="similarity">
    <text evidence="1">Belongs to the eIF-3 subunit I family.</text>
</comment>
<evidence type="ECO:0000255" key="1">
    <source>
        <dbReference type="HAMAP-Rule" id="MF_03008"/>
    </source>
</evidence>
<evidence type="ECO:0000305" key="2"/>
<feature type="chain" id="PRO_0000365331" description="Eukaryotic translation initiation factor 3 subunit I">
    <location>
        <begin position="1"/>
        <end position="325"/>
    </location>
</feature>
<feature type="repeat" description="WD 1">
    <location>
        <begin position="8"/>
        <end position="47"/>
    </location>
</feature>
<feature type="repeat" description="WD 2">
    <location>
        <begin position="50"/>
        <end position="89"/>
    </location>
</feature>
<feature type="repeat" description="WD 3">
    <location>
        <begin position="144"/>
        <end position="183"/>
    </location>
</feature>
<feature type="repeat" description="WD 4">
    <location>
        <begin position="186"/>
        <end position="225"/>
    </location>
</feature>
<feature type="repeat" description="WD 5">
    <location>
        <begin position="283"/>
        <end position="324"/>
    </location>
</feature>
<feature type="sequence conflict" description="In Ref. 1; ACH44280." evidence="2" ref="1">
    <original>S</original>
    <variation>F</variation>
    <location>
        <position position="12"/>
    </location>
</feature>
<feature type="sequence conflict" description="In Ref. 1; ACH44280." evidence="2" ref="1">
    <original>SY</original>
    <variation>KN</variation>
    <location>
        <begin position="299"/>
        <end position="300"/>
    </location>
</feature>
<protein>
    <recommendedName>
        <fullName evidence="1">Eukaryotic translation initiation factor 3 subunit I</fullName>
        <shortName evidence="1">eIF3i</shortName>
    </recommendedName>
    <alternativeName>
        <fullName evidence="1">Eukaryotic translation initiation factor 3 subunit 2</fullName>
    </alternativeName>
    <alternativeName>
        <fullName evidence="1">eIF-3-beta</fullName>
    </alternativeName>
    <alternativeName>
        <fullName evidence="1">eIF3 p36</fullName>
    </alternativeName>
</protein>
<accession>B5FZ19</accession>
<accession>B5FZ20</accession>
<gene>
    <name evidence="1" type="primary">EIF3I</name>
    <name evidence="1" type="synonym">EIF3S2</name>
</gene>
<dbReference type="EMBL" id="DQ214273">
    <property type="protein sequence ID" value="ACH44280.1"/>
    <property type="molecule type" value="mRNA"/>
</dbReference>
<dbReference type="EMBL" id="DQ214274">
    <property type="protein sequence ID" value="ACH44281.1"/>
    <property type="molecule type" value="mRNA"/>
</dbReference>
<dbReference type="EMBL" id="DQ214277">
    <property type="protein sequence ID" value="ACH44283.1"/>
    <property type="molecule type" value="mRNA"/>
</dbReference>
<dbReference type="EMBL" id="DQ214278">
    <property type="protein sequence ID" value="ACH44284.1"/>
    <property type="molecule type" value="mRNA"/>
</dbReference>
<dbReference type="EMBL" id="DQ214279">
    <property type="protein sequence ID" value="ACH44285.1"/>
    <property type="molecule type" value="mRNA"/>
</dbReference>
<dbReference type="EMBL" id="DQ214280">
    <property type="protein sequence ID" value="ACH44286.1"/>
    <property type="molecule type" value="mRNA"/>
</dbReference>
<dbReference type="RefSeq" id="NP_001157823.1">
    <property type="nucleotide sequence ID" value="NM_001164351.1"/>
</dbReference>
<dbReference type="RefSeq" id="XP_012426053.1">
    <property type="nucleotide sequence ID" value="XM_012570599.1"/>
</dbReference>
<dbReference type="SMR" id="B5FZ19"/>
<dbReference type="FunCoup" id="B5FZ19">
    <property type="interactions" value="776"/>
</dbReference>
<dbReference type="STRING" id="59729.ENSTGUP00000001453"/>
<dbReference type="Ensembl" id="ENSTGUT00000001466.2">
    <property type="protein sequence ID" value="ENSTGUP00000001453.2"/>
    <property type="gene ID" value="ENSTGUG00000001395.2"/>
</dbReference>
<dbReference type="GeneID" id="100190672"/>
<dbReference type="KEGG" id="tgu:100190672"/>
<dbReference type="CTD" id="8668"/>
<dbReference type="GeneTree" id="ENSGT00940000161371"/>
<dbReference type="InParanoid" id="B5FZ19"/>
<dbReference type="OMA" id="VWFSHNG"/>
<dbReference type="OrthoDB" id="24966at2759"/>
<dbReference type="Proteomes" id="UP000007754">
    <property type="component" value="Chromosome 23"/>
</dbReference>
<dbReference type="GO" id="GO:0016282">
    <property type="term" value="C:eukaryotic 43S preinitiation complex"/>
    <property type="evidence" value="ECO:0007669"/>
    <property type="project" value="UniProtKB-UniRule"/>
</dbReference>
<dbReference type="GO" id="GO:0033290">
    <property type="term" value="C:eukaryotic 48S preinitiation complex"/>
    <property type="evidence" value="ECO:0007669"/>
    <property type="project" value="UniProtKB-UniRule"/>
</dbReference>
<dbReference type="GO" id="GO:0005852">
    <property type="term" value="C:eukaryotic translation initiation factor 3 complex"/>
    <property type="evidence" value="ECO:0000250"/>
    <property type="project" value="UniProtKB"/>
</dbReference>
<dbReference type="GO" id="GO:0071541">
    <property type="term" value="C:eukaryotic translation initiation factor 3 complex, eIF3m"/>
    <property type="evidence" value="ECO:0007669"/>
    <property type="project" value="Ensembl"/>
</dbReference>
<dbReference type="GO" id="GO:0045202">
    <property type="term" value="C:synapse"/>
    <property type="evidence" value="ECO:0007669"/>
    <property type="project" value="Ensembl"/>
</dbReference>
<dbReference type="GO" id="GO:0003723">
    <property type="term" value="F:RNA binding"/>
    <property type="evidence" value="ECO:0007669"/>
    <property type="project" value="TreeGrafter"/>
</dbReference>
<dbReference type="GO" id="GO:0003743">
    <property type="term" value="F:translation initiation factor activity"/>
    <property type="evidence" value="ECO:0000250"/>
    <property type="project" value="UniProtKB"/>
</dbReference>
<dbReference type="GO" id="GO:0001732">
    <property type="term" value="P:formation of cytoplasmic translation initiation complex"/>
    <property type="evidence" value="ECO:0007669"/>
    <property type="project" value="UniProtKB-UniRule"/>
</dbReference>
<dbReference type="GO" id="GO:0006413">
    <property type="term" value="P:translational initiation"/>
    <property type="evidence" value="ECO:0000250"/>
    <property type="project" value="UniProtKB"/>
</dbReference>
<dbReference type="FunFam" id="2.130.10.10:FF:000127">
    <property type="entry name" value="Eukaryotic translation initiation factor 3 subunit I"/>
    <property type="match status" value="1"/>
</dbReference>
<dbReference type="Gene3D" id="2.130.10.10">
    <property type="entry name" value="YVTN repeat-like/Quinoprotein amine dehydrogenase"/>
    <property type="match status" value="1"/>
</dbReference>
<dbReference type="HAMAP" id="MF_03008">
    <property type="entry name" value="eIF3i"/>
    <property type="match status" value="1"/>
</dbReference>
<dbReference type="InterPro" id="IPR027525">
    <property type="entry name" value="eIF3i"/>
</dbReference>
<dbReference type="InterPro" id="IPR015943">
    <property type="entry name" value="WD40/YVTN_repeat-like_dom_sf"/>
</dbReference>
<dbReference type="InterPro" id="IPR019775">
    <property type="entry name" value="WD40_repeat_CS"/>
</dbReference>
<dbReference type="InterPro" id="IPR036322">
    <property type="entry name" value="WD40_repeat_dom_sf"/>
</dbReference>
<dbReference type="InterPro" id="IPR001680">
    <property type="entry name" value="WD40_rpt"/>
</dbReference>
<dbReference type="PANTHER" id="PTHR19877">
    <property type="entry name" value="EUKARYOTIC TRANSLATION INITIATION FACTOR 3 SUBUNIT I"/>
    <property type="match status" value="1"/>
</dbReference>
<dbReference type="PANTHER" id="PTHR19877:SF1">
    <property type="entry name" value="EUKARYOTIC TRANSLATION INITIATION FACTOR 3 SUBUNIT I"/>
    <property type="match status" value="1"/>
</dbReference>
<dbReference type="Pfam" id="PF24805">
    <property type="entry name" value="EIF3I"/>
    <property type="match status" value="1"/>
</dbReference>
<dbReference type="SMART" id="SM00320">
    <property type="entry name" value="WD40"/>
    <property type="match status" value="5"/>
</dbReference>
<dbReference type="SUPFAM" id="SSF50978">
    <property type="entry name" value="WD40 repeat-like"/>
    <property type="match status" value="1"/>
</dbReference>
<dbReference type="PROSITE" id="PS00678">
    <property type="entry name" value="WD_REPEATS_1"/>
    <property type="match status" value="1"/>
</dbReference>
<dbReference type="PROSITE" id="PS50082">
    <property type="entry name" value="WD_REPEATS_2"/>
    <property type="match status" value="4"/>
</dbReference>
<dbReference type="PROSITE" id="PS50294">
    <property type="entry name" value="WD_REPEATS_REGION"/>
    <property type="match status" value="2"/>
</dbReference>
<sequence>MKPILLQGHERSITQIKYNREGDLLFTVAKDPIVNVWYSVNGERLGTYNGHTGAVWCVDADWDTRHVLTGSADNSCRLWDCETGKQLALVKTSSAVRTCGFDFGGNIIMFSTDKQMGYQCFVSFFDLRDPSQIENNEPYMKIPCSDSKITSAVWGPLGEFIIAGHENGELNQFSAKSGEQLSNIKEHTKQINDIQTSRDMTMFITASKDNTAKLFDCTSLKHLKTFRTERPVNSAALSPIFDHVVLGGGQEAMDVTTTSTRIGKFEARFFHLAFEEEFGRVKGHFGPINSVAFHPDGKSYSSGGEDGYVRIHYFDPQYFEFEFEA</sequence>
<reference key="1">
    <citation type="journal article" date="2006" name="Proc. Natl. Acad. Sci. U.S.A.">
        <title>A molecular neuroethological approach for identifying and characterizing a cascade of behaviorally regulated genes.</title>
        <authorList>
            <person name="Wada K."/>
            <person name="Howard J.T."/>
            <person name="McConnell P."/>
            <person name="Whitney O."/>
            <person name="Lints T."/>
            <person name="Rivas M.V."/>
            <person name="Horita H."/>
            <person name="Patterson M.A."/>
            <person name="White S.A."/>
            <person name="Scharff C."/>
            <person name="Haesler S."/>
            <person name="Zhao S."/>
            <person name="Sakaguchi H."/>
            <person name="Hagiwara M."/>
            <person name="Shiraki T."/>
            <person name="Hirozane-Kishikawa T."/>
            <person name="Skene P."/>
            <person name="Hayashizaki Y."/>
            <person name="Carninci P."/>
            <person name="Jarvis E.D."/>
        </authorList>
    </citation>
    <scope>NUCLEOTIDE SEQUENCE [LARGE SCALE MRNA]</scope>
    <source>
        <tissue>Brain</tissue>
    </source>
</reference>